<name>IOLE_CLOBA</name>
<keyword id="KW-0170">Cobalt</keyword>
<keyword id="KW-0456">Lyase</keyword>
<keyword id="KW-0464">Manganese</keyword>
<proteinExistence type="inferred from homology"/>
<feature type="chain" id="PRO_0000352362" description="Inosose dehydratase">
    <location>
        <begin position="1"/>
        <end position="298"/>
    </location>
</feature>
<comment type="function">
    <text evidence="1">Catalyzes the dehydration of inosose (2-keto-myo-inositol, 2KMI or 2,4,6/3,5-pentahydroxycyclohexanone) to 3D-(3,5/4)-trihydroxycyclohexane-1,2-dione (D-2,3-diketo-4-deoxy-epi-inositol).</text>
</comment>
<comment type="catalytic activity">
    <reaction evidence="1">
        <text>scyllo-inosose = 3D-3,5/4-trihydroxycyclohexane-1,2-dione + H2O</text>
        <dbReference type="Rhea" id="RHEA:14065"/>
        <dbReference type="ChEBI" id="CHEBI:15377"/>
        <dbReference type="ChEBI" id="CHEBI:17811"/>
        <dbReference type="ChEBI" id="CHEBI:28446"/>
        <dbReference type="EC" id="4.2.1.44"/>
    </reaction>
</comment>
<comment type="cofactor">
    <cofactor evidence="1">
        <name>glutathione</name>
        <dbReference type="ChEBI" id="CHEBI:57925"/>
    </cofactor>
</comment>
<comment type="cofactor">
    <cofactor evidence="1">
        <name>Co(2+)</name>
        <dbReference type="ChEBI" id="CHEBI:48828"/>
    </cofactor>
    <cofactor evidence="1">
        <name>Mn(2+)</name>
        <dbReference type="ChEBI" id="CHEBI:29035"/>
    </cofactor>
</comment>
<comment type="pathway">
    <text evidence="1">Polyol metabolism; myo-inositol degradation into acetyl-CoA; acetyl-CoA from myo-inositol: step 2/7.</text>
</comment>
<comment type="similarity">
    <text evidence="1">Belongs to the IolE/MocC family.</text>
</comment>
<organism>
    <name type="scientific">Clostridium botulinum (strain Alaska E43 / Type E3)</name>
    <dbReference type="NCBI Taxonomy" id="508767"/>
    <lineage>
        <taxon>Bacteria</taxon>
        <taxon>Bacillati</taxon>
        <taxon>Bacillota</taxon>
        <taxon>Clostridia</taxon>
        <taxon>Eubacteriales</taxon>
        <taxon>Clostridiaceae</taxon>
        <taxon>Clostridium</taxon>
    </lineage>
</organism>
<reference key="1">
    <citation type="submission" date="2008-05" db="EMBL/GenBank/DDBJ databases">
        <title>Complete genome sequence of Clostridium botulinum E3 str. Alaska E43.</title>
        <authorList>
            <person name="Brinkac L.M."/>
            <person name="Brown J.L."/>
            <person name="Bruce D."/>
            <person name="Detter C."/>
            <person name="Munk C."/>
            <person name="Smith L.A."/>
            <person name="Smith T.J."/>
            <person name="Sutton G."/>
            <person name="Brettin T.S."/>
        </authorList>
    </citation>
    <scope>NUCLEOTIDE SEQUENCE [LARGE SCALE GENOMIC DNA]</scope>
    <source>
        <strain>Alaska E43 / Type E3</strain>
    </source>
</reference>
<evidence type="ECO:0000255" key="1">
    <source>
        <dbReference type="HAMAP-Rule" id="MF_01672"/>
    </source>
</evidence>
<dbReference type="EC" id="4.2.1.44" evidence="1"/>
<dbReference type="EMBL" id="CP001078">
    <property type="protein sequence ID" value="ACD53876.1"/>
    <property type="molecule type" value="Genomic_DNA"/>
</dbReference>
<dbReference type="RefSeq" id="WP_012451693.1">
    <property type="nucleotide sequence ID" value="NC_010723.1"/>
</dbReference>
<dbReference type="SMR" id="B2V4K2"/>
<dbReference type="KEGG" id="cbt:CLH_1257"/>
<dbReference type="HOGENOM" id="CLU_059523_0_0_9"/>
<dbReference type="UniPathway" id="UPA00076">
    <property type="reaction ID" value="UER00144"/>
</dbReference>
<dbReference type="GO" id="GO:0030145">
    <property type="term" value="F:manganese ion binding"/>
    <property type="evidence" value="ECO:0007669"/>
    <property type="project" value="UniProtKB-UniRule"/>
</dbReference>
<dbReference type="GO" id="GO:0050114">
    <property type="term" value="F:myo-inosose-2 dehydratase activity"/>
    <property type="evidence" value="ECO:0007669"/>
    <property type="project" value="UniProtKB-UniRule"/>
</dbReference>
<dbReference type="GO" id="GO:0019310">
    <property type="term" value="P:inositol catabolic process"/>
    <property type="evidence" value="ECO:0007669"/>
    <property type="project" value="UniProtKB-UniRule"/>
</dbReference>
<dbReference type="Gene3D" id="3.20.20.150">
    <property type="entry name" value="Divalent-metal-dependent TIM barrel enzymes"/>
    <property type="match status" value="1"/>
</dbReference>
<dbReference type="HAMAP" id="MF_01672">
    <property type="entry name" value="IolE"/>
    <property type="match status" value="1"/>
</dbReference>
<dbReference type="InterPro" id="IPR023952">
    <property type="entry name" value="IolE"/>
</dbReference>
<dbReference type="InterPro" id="IPR030823">
    <property type="entry name" value="IolE/MocC"/>
</dbReference>
<dbReference type="InterPro" id="IPR050312">
    <property type="entry name" value="IolE/XylAMocC-like"/>
</dbReference>
<dbReference type="InterPro" id="IPR036237">
    <property type="entry name" value="Xyl_isomerase-like_sf"/>
</dbReference>
<dbReference type="InterPro" id="IPR013022">
    <property type="entry name" value="Xyl_isomerase-like_TIM-brl"/>
</dbReference>
<dbReference type="NCBIfam" id="TIGR04379">
    <property type="entry name" value="myo_inos_iolE"/>
    <property type="match status" value="1"/>
</dbReference>
<dbReference type="PANTHER" id="PTHR12110">
    <property type="entry name" value="HYDROXYPYRUVATE ISOMERASE"/>
    <property type="match status" value="1"/>
</dbReference>
<dbReference type="PANTHER" id="PTHR12110:SF41">
    <property type="entry name" value="INOSOSE DEHYDRATASE"/>
    <property type="match status" value="1"/>
</dbReference>
<dbReference type="Pfam" id="PF01261">
    <property type="entry name" value="AP_endonuc_2"/>
    <property type="match status" value="1"/>
</dbReference>
<dbReference type="SUPFAM" id="SSF51658">
    <property type="entry name" value="Xylose isomerase-like"/>
    <property type="match status" value="1"/>
</dbReference>
<accession>B2V4K2</accession>
<protein>
    <recommendedName>
        <fullName evidence="1">Inosose dehydratase</fullName>
        <ecNumber evidence="1">4.2.1.44</ecNumber>
    </recommendedName>
    <alternativeName>
        <fullName evidence="1">2-keto-myo-inositol dehydratase</fullName>
        <shortName evidence="1">2KMI dehydratase</shortName>
    </alternativeName>
</protein>
<sequence>MFNSDKVKIGICPIGWTNDDMPDLGKENTFEQAISEMALAGFKGTEIGNKYPKDVKVLKKALEMRNLQIASAWFSSFLTTKPYEETEKEFIAYRDFLHAMGSKVIVVSEQGHSIQGQMETPIFDGKYHFNEEEWNLLANGLNKLGQLAADKGMKIVYHHHMGTGVQTTEEIDKLMSVTDENLVYLLFDTGHLVYSGENPVEILKKYVHRIKHVHLKDIRPEIVSKVKNEKLSFLKGVRAGAFTVPGDGSIDFEPIFKILAENNYEGWLMIEAEQDPSIANPLEYAIKGRQYIKEKASI</sequence>
<gene>
    <name evidence="1" type="primary">iolE</name>
    <name type="ordered locus">CLH_1257</name>
</gene>